<keyword id="KW-0067">ATP-binding</keyword>
<keyword id="KW-0963">Cytoplasm</keyword>
<keyword id="KW-0275">Fatty acid biosynthesis</keyword>
<keyword id="KW-0276">Fatty acid metabolism</keyword>
<keyword id="KW-0444">Lipid biosynthesis</keyword>
<keyword id="KW-0443">Lipid metabolism</keyword>
<keyword id="KW-0547">Nucleotide-binding</keyword>
<keyword id="KW-1185">Reference proteome</keyword>
<keyword id="KW-0808">Transferase</keyword>
<gene>
    <name evidence="1" type="primary">accA</name>
    <name type="ordered locus">SSON_0197</name>
</gene>
<accession>Q3Z5H3</accession>
<dbReference type="EC" id="2.1.3.15" evidence="1"/>
<dbReference type="EMBL" id="CP000038">
    <property type="protein sequence ID" value="AAZ86989.1"/>
    <property type="molecule type" value="Genomic_DNA"/>
</dbReference>
<dbReference type="RefSeq" id="WP_000055743.1">
    <property type="nucleotide sequence ID" value="NC_007384.1"/>
</dbReference>
<dbReference type="SMR" id="Q3Z5H3"/>
<dbReference type="GeneID" id="93777240"/>
<dbReference type="KEGG" id="ssn:SSON_0197"/>
<dbReference type="HOGENOM" id="CLU_015486_0_2_6"/>
<dbReference type="UniPathway" id="UPA00655">
    <property type="reaction ID" value="UER00711"/>
</dbReference>
<dbReference type="Proteomes" id="UP000002529">
    <property type="component" value="Chromosome"/>
</dbReference>
<dbReference type="GO" id="GO:0009317">
    <property type="term" value="C:acetyl-CoA carboxylase complex"/>
    <property type="evidence" value="ECO:0007669"/>
    <property type="project" value="InterPro"/>
</dbReference>
<dbReference type="GO" id="GO:0003989">
    <property type="term" value="F:acetyl-CoA carboxylase activity"/>
    <property type="evidence" value="ECO:0007669"/>
    <property type="project" value="InterPro"/>
</dbReference>
<dbReference type="GO" id="GO:0005524">
    <property type="term" value="F:ATP binding"/>
    <property type="evidence" value="ECO:0007669"/>
    <property type="project" value="UniProtKB-KW"/>
</dbReference>
<dbReference type="GO" id="GO:0016743">
    <property type="term" value="F:carboxyl- or carbamoyltransferase activity"/>
    <property type="evidence" value="ECO:0007669"/>
    <property type="project" value="UniProtKB-UniRule"/>
</dbReference>
<dbReference type="GO" id="GO:0006633">
    <property type="term" value="P:fatty acid biosynthetic process"/>
    <property type="evidence" value="ECO:0007669"/>
    <property type="project" value="UniProtKB-KW"/>
</dbReference>
<dbReference type="GO" id="GO:2001295">
    <property type="term" value="P:malonyl-CoA biosynthetic process"/>
    <property type="evidence" value="ECO:0007669"/>
    <property type="project" value="UniProtKB-UniRule"/>
</dbReference>
<dbReference type="FunFam" id="3.90.226.10:FF:000008">
    <property type="entry name" value="Acetyl-coenzyme A carboxylase carboxyl transferase subunit alpha"/>
    <property type="match status" value="1"/>
</dbReference>
<dbReference type="Gene3D" id="3.90.226.10">
    <property type="entry name" value="2-enoyl-CoA Hydratase, Chain A, domain 1"/>
    <property type="match status" value="1"/>
</dbReference>
<dbReference type="HAMAP" id="MF_00823">
    <property type="entry name" value="AcetylCoA_CT_alpha"/>
    <property type="match status" value="1"/>
</dbReference>
<dbReference type="InterPro" id="IPR001095">
    <property type="entry name" value="Acetyl_CoA_COase_a_su"/>
</dbReference>
<dbReference type="InterPro" id="IPR029045">
    <property type="entry name" value="ClpP/crotonase-like_dom_sf"/>
</dbReference>
<dbReference type="InterPro" id="IPR011763">
    <property type="entry name" value="COA_CT_C"/>
</dbReference>
<dbReference type="NCBIfam" id="TIGR00513">
    <property type="entry name" value="accA"/>
    <property type="match status" value="1"/>
</dbReference>
<dbReference type="NCBIfam" id="NF041504">
    <property type="entry name" value="AccA_sub"/>
    <property type="match status" value="1"/>
</dbReference>
<dbReference type="NCBIfam" id="NF004344">
    <property type="entry name" value="PRK05724.1"/>
    <property type="match status" value="1"/>
</dbReference>
<dbReference type="PANTHER" id="PTHR42853">
    <property type="entry name" value="ACETYL-COENZYME A CARBOXYLASE CARBOXYL TRANSFERASE SUBUNIT ALPHA"/>
    <property type="match status" value="1"/>
</dbReference>
<dbReference type="PANTHER" id="PTHR42853:SF3">
    <property type="entry name" value="ACETYL-COENZYME A CARBOXYLASE CARBOXYL TRANSFERASE SUBUNIT ALPHA, CHLOROPLASTIC"/>
    <property type="match status" value="1"/>
</dbReference>
<dbReference type="Pfam" id="PF03255">
    <property type="entry name" value="ACCA"/>
    <property type="match status" value="1"/>
</dbReference>
<dbReference type="PRINTS" id="PR01069">
    <property type="entry name" value="ACCCTRFRASEA"/>
</dbReference>
<dbReference type="SUPFAM" id="SSF52096">
    <property type="entry name" value="ClpP/crotonase"/>
    <property type="match status" value="1"/>
</dbReference>
<dbReference type="PROSITE" id="PS50989">
    <property type="entry name" value="COA_CT_CTER"/>
    <property type="match status" value="1"/>
</dbReference>
<sequence>MSLNFLDFEQPIAELEAKIDSLTAVSRQDEKLDINIDEEVHRLREKSVELTRKIFADLGAWQIAQLARHPQRPYTLDYVRLAFDEFDELAGDRAYADDKAIVGGIARLDGRPVMIIGHQKGRETKEKIRRNFGMPAPEGYRKALRLMQMAERFKMPIITFIDTPGAYPGVGAEERGQSEAIARNLREMSRLGVPVVCTVIGEGGSGGALAIGVGDKVNMLQYSTYSVISPEGCASILWKSADKAPLAAEAMGIIAPRLKELKLIDSIIPEPLGGAHRNPEAMAVSLKAQLLADLADLDVLSTEDLKNRRYQRLMSYGYA</sequence>
<name>ACCA_SHISS</name>
<reference key="1">
    <citation type="journal article" date="2005" name="Nucleic Acids Res.">
        <title>Genome dynamics and diversity of Shigella species, the etiologic agents of bacillary dysentery.</title>
        <authorList>
            <person name="Yang F."/>
            <person name="Yang J."/>
            <person name="Zhang X."/>
            <person name="Chen L."/>
            <person name="Jiang Y."/>
            <person name="Yan Y."/>
            <person name="Tang X."/>
            <person name="Wang J."/>
            <person name="Xiong Z."/>
            <person name="Dong J."/>
            <person name="Xue Y."/>
            <person name="Zhu Y."/>
            <person name="Xu X."/>
            <person name="Sun L."/>
            <person name="Chen S."/>
            <person name="Nie H."/>
            <person name="Peng J."/>
            <person name="Xu J."/>
            <person name="Wang Y."/>
            <person name="Yuan Z."/>
            <person name="Wen Y."/>
            <person name="Yao Z."/>
            <person name="Shen Y."/>
            <person name="Qiang B."/>
            <person name="Hou Y."/>
            <person name="Yu J."/>
            <person name="Jin Q."/>
        </authorList>
    </citation>
    <scope>NUCLEOTIDE SEQUENCE [LARGE SCALE GENOMIC DNA]</scope>
    <source>
        <strain>Ss046</strain>
    </source>
</reference>
<protein>
    <recommendedName>
        <fullName evidence="1">Acetyl-coenzyme A carboxylase carboxyl transferase subunit alpha</fullName>
        <shortName evidence="1">ACCase subunit alpha</shortName>
        <shortName evidence="1">Acetyl-CoA carboxylase carboxyltransferase subunit alpha</shortName>
        <ecNumber evidence="1">2.1.3.15</ecNumber>
    </recommendedName>
</protein>
<proteinExistence type="inferred from homology"/>
<evidence type="ECO:0000255" key="1">
    <source>
        <dbReference type="HAMAP-Rule" id="MF_00823"/>
    </source>
</evidence>
<evidence type="ECO:0000255" key="2">
    <source>
        <dbReference type="PROSITE-ProRule" id="PRU01137"/>
    </source>
</evidence>
<feature type="chain" id="PRO_0000223824" description="Acetyl-coenzyme A carboxylase carboxyl transferase subunit alpha">
    <location>
        <begin position="1"/>
        <end position="319"/>
    </location>
</feature>
<feature type="domain" description="CoA carboxyltransferase C-terminal" evidence="2">
    <location>
        <begin position="35"/>
        <end position="296"/>
    </location>
</feature>
<comment type="function">
    <text evidence="1">Component of the acetyl coenzyme A carboxylase (ACC) complex. First, biotin carboxylase catalyzes the carboxylation of biotin on its carrier protein (BCCP) and then the CO(2) group is transferred by the carboxyltransferase to acetyl-CoA to form malonyl-CoA.</text>
</comment>
<comment type="catalytic activity">
    <reaction evidence="1">
        <text>N(6)-carboxybiotinyl-L-lysyl-[protein] + acetyl-CoA = N(6)-biotinyl-L-lysyl-[protein] + malonyl-CoA</text>
        <dbReference type="Rhea" id="RHEA:54728"/>
        <dbReference type="Rhea" id="RHEA-COMP:10505"/>
        <dbReference type="Rhea" id="RHEA-COMP:10506"/>
        <dbReference type="ChEBI" id="CHEBI:57288"/>
        <dbReference type="ChEBI" id="CHEBI:57384"/>
        <dbReference type="ChEBI" id="CHEBI:83144"/>
        <dbReference type="ChEBI" id="CHEBI:83145"/>
        <dbReference type="EC" id="2.1.3.15"/>
    </reaction>
</comment>
<comment type="pathway">
    <text evidence="1">Lipid metabolism; malonyl-CoA biosynthesis; malonyl-CoA from acetyl-CoA: step 1/1.</text>
</comment>
<comment type="subunit">
    <text evidence="1">Acetyl-CoA carboxylase is a heterohexamer composed of biotin carboxyl carrier protein (AccB), biotin carboxylase (AccC) and two subunits each of ACCase subunit alpha (AccA) and ACCase subunit beta (AccD).</text>
</comment>
<comment type="subcellular location">
    <subcellularLocation>
        <location evidence="1">Cytoplasm</location>
    </subcellularLocation>
</comment>
<comment type="similarity">
    <text evidence="1">Belongs to the AccA family.</text>
</comment>
<organism>
    <name type="scientific">Shigella sonnei (strain Ss046)</name>
    <dbReference type="NCBI Taxonomy" id="300269"/>
    <lineage>
        <taxon>Bacteria</taxon>
        <taxon>Pseudomonadati</taxon>
        <taxon>Pseudomonadota</taxon>
        <taxon>Gammaproteobacteria</taxon>
        <taxon>Enterobacterales</taxon>
        <taxon>Enterobacteriaceae</taxon>
        <taxon>Shigella</taxon>
    </lineage>
</organism>